<protein>
    <recommendedName>
        <fullName evidence="2">DnaA regulatory inactivator Hda</fullName>
    </recommendedName>
</protein>
<comment type="function">
    <text evidence="1">Mediates the interaction of DNA replication initiator protein DnaA with DNA polymerase subunit beta sliding clamp (dnaN). Stimulates hydrolysis of ATP-DnaA to ADP-DnaA, rendering DnaA inactive for reinitiation, a process called regulatory inhibition of DnaA or RIDA (By similarity).</text>
</comment>
<comment type="subunit">
    <text evidence="2">The active form seems to be an ADP-bound monomer. Forms the RIDA complex (regulatory inactivation of DnaA) of ATP-DnaA, ADP-Hda and the DNA-loaded beta sliding clamp (dnaN).</text>
</comment>
<comment type="similarity">
    <text evidence="2">Belongs to the DnaA family. HdA subfamily.</text>
</comment>
<reference key="1">
    <citation type="submission" date="2007-11" db="EMBL/GenBank/DDBJ databases">
        <authorList>
            <consortium name="The Salmonella enterica serovar Arizonae Genome Sequencing Project"/>
            <person name="McClelland M."/>
            <person name="Sanderson E.K."/>
            <person name="Porwollik S."/>
            <person name="Spieth J."/>
            <person name="Clifton W.S."/>
            <person name="Fulton R."/>
            <person name="Chunyan W."/>
            <person name="Wollam A."/>
            <person name="Shah N."/>
            <person name="Pepin K."/>
            <person name="Bhonagiri V."/>
            <person name="Nash W."/>
            <person name="Johnson M."/>
            <person name="Thiruvilangam P."/>
            <person name="Wilson R."/>
        </authorList>
    </citation>
    <scope>NUCLEOTIDE SEQUENCE [LARGE SCALE GENOMIC DNA]</scope>
    <source>
        <strain>ATCC BAA-731 / CDC346-86 / RSK2980</strain>
    </source>
</reference>
<dbReference type="EMBL" id="CP000880">
    <property type="protein sequence ID" value="ABX20321.1"/>
    <property type="molecule type" value="Genomic_DNA"/>
</dbReference>
<dbReference type="SMR" id="A9MHP3"/>
<dbReference type="STRING" id="41514.SARI_00384"/>
<dbReference type="KEGG" id="ses:SARI_00384"/>
<dbReference type="HOGENOM" id="CLU_072265_1_1_6"/>
<dbReference type="Proteomes" id="UP000002084">
    <property type="component" value="Chromosome"/>
</dbReference>
<dbReference type="GO" id="GO:0006270">
    <property type="term" value="P:DNA replication initiation"/>
    <property type="evidence" value="ECO:0007669"/>
    <property type="project" value="TreeGrafter"/>
</dbReference>
<dbReference type="GO" id="GO:0032297">
    <property type="term" value="P:negative regulation of DNA-templated DNA replication initiation"/>
    <property type="evidence" value="ECO:0007669"/>
    <property type="project" value="InterPro"/>
</dbReference>
<dbReference type="FunFam" id="1.10.8.60:FF:000024">
    <property type="entry name" value="DnaA regulatory inactivator Hda"/>
    <property type="match status" value="1"/>
</dbReference>
<dbReference type="FunFam" id="3.40.50.300:FF:000452">
    <property type="entry name" value="DnaA regulatory inactivator Hda"/>
    <property type="match status" value="1"/>
</dbReference>
<dbReference type="Gene3D" id="1.10.8.60">
    <property type="match status" value="1"/>
</dbReference>
<dbReference type="Gene3D" id="3.40.50.300">
    <property type="entry name" value="P-loop containing nucleotide triphosphate hydrolases"/>
    <property type="match status" value="1"/>
</dbReference>
<dbReference type="HAMAP" id="MF_01158">
    <property type="entry name" value="Hda"/>
    <property type="match status" value="1"/>
</dbReference>
<dbReference type="InterPro" id="IPR020591">
    <property type="entry name" value="Chromosome_initiator_DnaA-like"/>
</dbReference>
<dbReference type="InterPro" id="IPR013317">
    <property type="entry name" value="DnaA_dom"/>
</dbReference>
<dbReference type="InterPro" id="IPR017788">
    <property type="entry name" value="Hda"/>
</dbReference>
<dbReference type="InterPro" id="IPR022864">
    <property type="entry name" value="Hda_Enterobact"/>
</dbReference>
<dbReference type="InterPro" id="IPR055199">
    <property type="entry name" value="Hda_lid"/>
</dbReference>
<dbReference type="InterPro" id="IPR027417">
    <property type="entry name" value="P-loop_NTPase"/>
</dbReference>
<dbReference type="NCBIfam" id="TIGR03420">
    <property type="entry name" value="DnaA_homol_Hda"/>
    <property type="match status" value="1"/>
</dbReference>
<dbReference type="NCBIfam" id="NF005982">
    <property type="entry name" value="PRK08084.1"/>
    <property type="match status" value="1"/>
</dbReference>
<dbReference type="PANTHER" id="PTHR30050">
    <property type="entry name" value="CHROMOSOMAL REPLICATION INITIATOR PROTEIN DNAA"/>
    <property type="match status" value="1"/>
</dbReference>
<dbReference type="PANTHER" id="PTHR30050:SF5">
    <property type="entry name" value="DNAA REGULATORY INACTIVATOR HDA"/>
    <property type="match status" value="1"/>
</dbReference>
<dbReference type="Pfam" id="PF00308">
    <property type="entry name" value="Bac_DnaA"/>
    <property type="match status" value="1"/>
</dbReference>
<dbReference type="Pfam" id="PF22688">
    <property type="entry name" value="Hda_lid"/>
    <property type="match status" value="1"/>
</dbReference>
<dbReference type="PRINTS" id="PR00051">
    <property type="entry name" value="DNAA"/>
</dbReference>
<dbReference type="SUPFAM" id="SSF52540">
    <property type="entry name" value="P-loop containing nucleoside triphosphate hydrolases"/>
    <property type="match status" value="1"/>
</dbReference>
<sequence>MQSWVEVSLNTPAQLSLPLYLPDDETFASFWPGDNASLLAALQNVLRQEHSGYIYLWAREGAGRSHLLHAACAELSQRGDAVGYVPLDKRTWFVPEVLDGMEHLSLVCIDNIECVAGDELWEMAIFDLYNRILESGKTRLLITGDRPPRQLNLGLPDLASRLDWGQIYKLQPLSDEDKLQALQLRARLRGFELPEDVGRFLLKRLDREMRTLFMTLDQLDHASITAQRKLTIPFVKEILKL</sequence>
<keyword id="KW-0235">DNA replication</keyword>
<keyword id="KW-0236">DNA replication inhibitor</keyword>
<keyword id="KW-1185">Reference proteome</keyword>
<accession>A9MHP3</accession>
<evidence type="ECO:0000250" key="1"/>
<evidence type="ECO:0000255" key="2">
    <source>
        <dbReference type="HAMAP-Rule" id="MF_01158"/>
    </source>
</evidence>
<gene>
    <name evidence="2" type="primary">hda</name>
    <name type="ordered locus">SARI_00384</name>
</gene>
<organism>
    <name type="scientific">Salmonella arizonae (strain ATCC BAA-731 / CDC346-86 / RSK2980)</name>
    <dbReference type="NCBI Taxonomy" id="41514"/>
    <lineage>
        <taxon>Bacteria</taxon>
        <taxon>Pseudomonadati</taxon>
        <taxon>Pseudomonadota</taxon>
        <taxon>Gammaproteobacteria</taxon>
        <taxon>Enterobacterales</taxon>
        <taxon>Enterobacteriaceae</taxon>
        <taxon>Salmonella</taxon>
    </lineage>
</organism>
<feature type="chain" id="PRO_1000085355" description="DnaA regulatory inactivator Hda">
    <location>
        <begin position="1"/>
        <end position="241"/>
    </location>
</feature>
<proteinExistence type="inferred from homology"/>
<name>HDA_SALAR</name>